<evidence type="ECO:0000250" key="1"/>
<evidence type="ECO:0000255" key="2">
    <source>
        <dbReference type="PROSITE-ProRule" id="PRU01007"/>
    </source>
</evidence>
<evidence type="ECO:0000305" key="3"/>
<name>PH4H_DROME</name>
<accession>P17276</accession>
<accession>O46110</accession>
<accession>Q27599</accession>
<accession>Q27600</accession>
<dbReference type="EC" id="1.14.16.1"/>
<dbReference type="EC" id="1.14.16.4"/>
<dbReference type="EMBL" id="M81833">
    <property type="status" value="NOT_ANNOTATED_CDS"/>
    <property type="molecule type" value="Genomic_RNA"/>
</dbReference>
<dbReference type="EMBL" id="M32802">
    <property type="protein sequence ID" value="AAA69513.1"/>
    <property type="molecule type" value="mRNA"/>
</dbReference>
<dbReference type="EMBL" id="X98116">
    <property type="protein sequence ID" value="CAA66797.1"/>
    <property type="molecule type" value="Genomic_DNA"/>
</dbReference>
<dbReference type="EMBL" id="X98116">
    <property type="protein sequence ID" value="CAA66798.1"/>
    <property type="molecule type" value="Genomic_DNA"/>
</dbReference>
<dbReference type="EMBL" id="AE014296">
    <property type="protein sequence ID" value="AAF50517.1"/>
    <property type="molecule type" value="Genomic_DNA"/>
</dbReference>
<dbReference type="EMBL" id="AY069306">
    <property type="protein sequence ID" value="AAL39451.1"/>
    <property type="molecule type" value="mRNA"/>
</dbReference>
<dbReference type="EMBL" id="AJ001718">
    <property type="protein sequence ID" value="CAA04950.1"/>
    <property type="molecule type" value="Genomic_DNA"/>
</dbReference>
<dbReference type="EMBL" id="AJ001719">
    <property type="protein sequence ID" value="CAB51601.1"/>
    <property type="molecule type" value="Genomic_DNA"/>
</dbReference>
<dbReference type="EMBL" id="AJ001720">
    <property type="protein sequence ID" value="CAB51601.1"/>
    <property type="status" value="JOINED"/>
    <property type="molecule type" value="Genomic_DNA"/>
</dbReference>
<dbReference type="EMBL" id="AJ001722">
    <property type="protein sequence ID" value="CAB51599.1"/>
    <property type="molecule type" value="mRNA"/>
</dbReference>
<dbReference type="EMBL" id="AJ001723">
    <property type="protein sequence ID" value="CAB51597.1"/>
    <property type="molecule type" value="mRNA"/>
</dbReference>
<dbReference type="PIR" id="A42271">
    <property type="entry name" value="A42271"/>
</dbReference>
<dbReference type="PIR" id="JC4888">
    <property type="entry name" value="JC4888"/>
</dbReference>
<dbReference type="PIR" id="JQ0766">
    <property type="entry name" value="JQ0766"/>
</dbReference>
<dbReference type="RefSeq" id="NP_001014573.1">
    <property type="nucleotide sequence ID" value="NM_001014573.2"/>
</dbReference>
<dbReference type="RefSeq" id="NP_001261542.1">
    <property type="nucleotide sequence ID" value="NM_001274613.1"/>
</dbReference>
<dbReference type="RefSeq" id="NP_523963.2">
    <property type="nucleotide sequence ID" value="NM_079239.4"/>
</dbReference>
<dbReference type="SMR" id="P17276"/>
<dbReference type="BioGRID" id="64301">
    <property type="interactions" value="42"/>
</dbReference>
<dbReference type="DIP" id="DIP-20514N"/>
<dbReference type="FunCoup" id="P17276">
    <property type="interactions" value="122"/>
</dbReference>
<dbReference type="IntAct" id="P17276">
    <property type="interactions" value="14"/>
</dbReference>
<dbReference type="STRING" id="7227.FBpp0076523"/>
<dbReference type="PaxDb" id="7227-FBpp0076523"/>
<dbReference type="DNASU" id="38871"/>
<dbReference type="EnsemblMetazoa" id="FBtr0076811">
    <property type="protein sequence ID" value="FBpp0076523"/>
    <property type="gene ID" value="FBgn0001208"/>
</dbReference>
<dbReference type="EnsemblMetazoa" id="FBtr0334645">
    <property type="protein sequence ID" value="FBpp0306707"/>
    <property type="gene ID" value="FBgn0001208"/>
</dbReference>
<dbReference type="GeneID" id="38871"/>
<dbReference type="KEGG" id="dme:Dmel_CG7399"/>
<dbReference type="AGR" id="FB:FBgn0001208"/>
<dbReference type="CTD" id="38871"/>
<dbReference type="FlyBase" id="FBgn0001208">
    <property type="gene designation" value="Hn"/>
</dbReference>
<dbReference type="VEuPathDB" id="VectorBase:FBgn0001208"/>
<dbReference type="eggNOG" id="KOG3820">
    <property type="taxonomic scope" value="Eukaryota"/>
</dbReference>
<dbReference type="GeneTree" id="ENSGT00950000182885"/>
<dbReference type="InParanoid" id="P17276"/>
<dbReference type="OMA" id="FHDEVYR"/>
<dbReference type="OrthoDB" id="983542at2759"/>
<dbReference type="PhylomeDB" id="P17276"/>
<dbReference type="Reactome" id="R-DME-8964208">
    <property type="pathway name" value="Phenylalanine metabolism"/>
</dbReference>
<dbReference type="SignaLink" id="P17276"/>
<dbReference type="UniPathway" id="UPA00139">
    <property type="reaction ID" value="UER00337"/>
</dbReference>
<dbReference type="BioGRID-ORCS" id="38871">
    <property type="hits" value="0 hits in 3 CRISPR screens"/>
</dbReference>
<dbReference type="ChiTaRS" id="Hn">
    <property type="organism name" value="fly"/>
</dbReference>
<dbReference type="GenomeRNAi" id="38871"/>
<dbReference type="PRO" id="PR:P17276"/>
<dbReference type="Proteomes" id="UP000000803">
    <property type="component" value="Chromosome 3L"/>
</dbReference>
<dbReference type="Bgee" id="FBgn0001208">
    <property type="expression patterns" value="Expressed in head capsule and 71 other cell types or tissues"/>
</dbReference>
<dbReference type="ExpressionAtlas" id="P17276">
    <property type="expression patterns" value="baseline and differential"/>
</dbReference>
<dbReference type="GO" id="GO:0005506">
    <property type="term" value="F:iron ion binding"/>
    <property type="evidence" value="ECO:0007669"/>
    <property type="project" value="InterPro"/>
</dbReference>
<dbReference type="GO" id="GO:0004505">
    <property type="term" value="F:phenylalanine 4-monooxygenase activity"/>
    <property type="evidence" value="ECO:0000314"/>
    <property type="project" value="FlyBase"/>
</dbReference>
<dbReference type="GO" id="GO:0004510">
    <property type="term" value="F:tryptophan 5-monooxygenase activity"/>
    <property type="evidence" value="ECO:0000314"/>
    <property type="project" value="FlyBase"/>
</dbReference>
<dbReference type="GO" id="GO:0042416">
    <property type="term" value="P:dopamine biosynthetic process"/>
    <property type="evidence" value="ECO:0000270"/>
    <property type="project" value="FlyBase"/>
</dbReference>
<dbReference type="GO" id="GO:0006726">
    <property type="term" value="P:eye pigment biosynthetic process"/>
    <property type="evidence" value="ECO:0000314"/>
    <property type="project" value="FlyBase"/>
</dbReference>
<dbReference type="GO" id="GO:0007377">
    <property type="term" value="P:germ-band extension"/>
    <property type="evidence" value="ECO:0000315"/>
    <property type="project" value="FlyBase"/>
</dbReference>
<dbReference type="GO" id="GO:0006559">
    <property type="term" value="P:L-phenylalanine catabolic process"/>
    <property type="evidence" value="ECO:0000315"/>
    <property type="project" value="FlyBase"/>
</dbReference>
<dbReference type="GO" id="GO:0007616">
    <property type="term" value="P:long-term memory"/>
    <property type="evidence" value="ECO:0000316"/>
    <property type="project" value="FlyBase"/>
</dbReference>
<dbReference type="GO" id="GO:0006587">
    <property type="term" value="P:serotonin biosynthetic process from tryptophan"/>
    <property type="evidence" value="ECO:0000315"/>
    <property type="project" value="FlyBase"/>
</dbReference>
<dbReference type="GO" id="GO:0006571">
    <property type="term" value="P:tyrosine biosynthetic process"/>
    <property type="evidence" value="ECO:0000318"/>
    <property type="project" value="GO_Central"/>
</dbReference>
<dbReference type="CDD" id="cd04904">
    <property type="entry name" value="ACT_AAAH"/>
    <property type="match status" value="1"/>
</dbReference>
<dbReference type="CDD" id="cd03347">
    <property type="entry name" value="eu_PheOH"/>
    <property type="match status" value="1"/>
</dbReference>
<dbReference type="FunFam" id="1.10.800.10:FF:000004">
    <property type="entry name" value="Tyrosine 3-monooxygenase"/>
    <property type="match status" value="1"/>
</dbReference>
<dbReference type="Gene3D" id="1.10.800.10">
    <property type="entry name" value="Aromatic amino acid hydroxylase"/>
    <property type="match status" value="1"/>
</dbReference>
<dbReference type="InterPro" id="IPR045865">
    <property type="entry name" value="ACT-like_dom_sf"/>
</dbReference>
<dbReference type="InterPro" id="IPR002912">
    <property type="entry name" value="ACT_dom"/>
</dbReference>
<dbReference type="InterPro" id="IPR001273">
    <property type="entry name" value="ArAA_hydroxylase"/>
</dbReference>
<dbReference type="InterPro" id="IPR018301">
    <property type="entry name" value="ArAA_hydroxylase_Fe/CU_BS"/>
</dbReference>
<dbReference type="InterPro" id="IPR036951">
    <property type="entry name" value="ArAA_hydroxylase_sf"/>
</dbReference>
<dbReference type="InterPro" id="IPR036329">
    <property type="entry name" value="Aro-AA_hydroxylase_C_sf"/>
</dbReference>
<dbReference type="InterPro" id="IPR019774">
    <property type="entry name" value="Aromatic-AA_hydroxylase_C"/>
</dbReference>
<dbReference type="InterPro" id="IPR041912">
    <property type="entry name" value="Euk_PheOH_cat"/>
</dbReference>
<dbReference type="InterPro" id="IPR005961">
    <property type="entry name" value="Phe-4-hydroxylase_tetra"/>
</dbReference>
<dbReference type="InterPro" id="IPR019773">
    <property type="entry name" value="Tyrosine_3-monooxygenase-like"/>
</dbReference>
<dbReference type="NCBIfam" id="TIGR01268">
    <property type="entry name" value="Phe4hydrox_tetr"/>
    <property type="match status" value="1"/>
</dbReference>
<dbReference type="PANTHER" id="PTHR11473">
    <property type="entry name" value="AROMATIC AMINO ACID HYDROXYLASE"/>
    <property type="match status" value="1"/>
</dbReference>
<dbReference type="PANTHER" id="PTHR11473:SF24">
    <property type="entry name" value="PHENYLALANINE-4-HYDROXYLASE"/>
    <property type="match status" value="1"/>
</dbReference>
<dbReference type="Pfam" id="PF00351">
    <property type="entry name" value="Biopterin_H"/>
    <property type="match status" value="1"/>
</dbReference>
<dbReference type="PIRSF" id="PIRSF000336">
    <property type="entry name" value="TH"/>
    <property type="match status" value="1"/>
</dbReference>
<dbReference type="PRINTS" id="PR00372">
    <property type="entry name" value="FYWHYDRXLASE"/>
</dbReference>
<dbReference type="SUPFAM" id="SSF55021">
    <property type="entry name" value="ACT-like"/>
    <property type="match status" value="1"/>
</dbReference>
<dbReference type="SUPFAM" id="SSF56534">
    <property type="entry name" value="Aromatic aminoacid monoxygenases, catalytic and oligomerization domains"/>
    <property type="match status" value="1"/>
</dbReference>
<dbReference type="PROSITE" id="PS51671">
    <property type="entry name" value="ACT"/>
    <property type="match status" value="1"/>
</dbReference>
<dbReference type="PROSITE" id="PS00367">
    <property type="entry name" value="BH4_AAA_HYDROXYL_1"/>
    <property type="match status" value="1"/>
</dbReference>
<dbReference type="PROSITE" id="PS51410">
    <property type="entry name" value="BH4_AAA_HYDROXYL_2"/>
    <property type="match status" value="1"/>
</dbReference>
<gene>
    <name type="primary">Hn</name>
    <name type="synonym">pah</name>
    <name type="synonym">Tph</name>
    <name type="ORF">CG7399</name>
</gene>
<feature type="chain" id="PRO_0000205552" description="Protein henna">
    <location>
        <begin position="1"/>
        <end position="452"/>
    </location>
</feature>
<feature type="domain" description="ACT" evidence="2">
    <location>
        <begin position="36"/>
        <end position="107"/>
    </location>
</feature>
<feature type="binding site" evidence="1">
    <location>
        <position position="284"/>
    </location>
    <ligand>
        <name>Fe cation</name>
        <dbReference type="ChEBI" id="CHEBI:24875"/>
    </ligand>
</feature>
<feature type="binding site" evidence="1">
    <location>
        <position position="289"/>
    </location>
    <ligand>
        <name>Fe cation</name>
        <dbReference type="ChEBI" id="CHEBI:24875"/>
    </ligand>
</feature>
<feature type="binding site" evidence="1">
    <location>
        <position position="329"/>
    </location>
    <ligand>
        <name>Fe cation</name>
        <dbReference type="ChEBI" id="CHEBI:24875"/>
    </ligand>
</feature>
<feature type="modified residue" description="Phosphoserine; by CaMK2" evidence="1">
    <location>
        <position position="272"/>
    </location>
</feature>
<feature type="sequence conflict" description="In Ref. 2; AAA69513." evidence="3" ref="2">
    <original>E</original>
    <variation>A</variation>
    <location>
        <position position="28"/>
    </location>
</feature>
<feature type="sequence conflict" description="In Ref. 2; AAA69513." evidence="3" ref="2">
    <original>KDSSLSSGA</original>
    <variation>RIRRCPAEL</variation>
    <location>
        <begin position="39"/>
        <end position="47"/>
    </location>
</feature>
<feature type="sequence conflict" description="In Ref. 2; AAA69513." evidence="3" ref="2">
    <original>FK</original>
    <variation>LR</variation>
    <location>
        <begin position="55"/>
        <end position="56"/>
    </location>
</feature>
<feature type="sequence conflict" description="In Ref. 2; AAA69513." evidence="3" ref="2">
    <original>VHIESRSSL</original>
    <variation>CILSRILAPWF</variation>
    <location>
        <begin position="63"/>
        <end position="71"/>
    </location>
</feature>
<feature type="sequence conflict" description="In Ref. 2; AAA69513." evidence="3" ref="2">
    <original>PGYEFFVEADGKSGALGKAIEDVKEQCSYFNIISRDYKDNA</original>
    <variation>SSCFWRRMENRSLGKSHRGCEGAMLATLTSSCRELQGVMP</variation>
    <location>
        <begin position="74"/>
        <end position="114"/>
    </location>
</feature>
<feature type="sequence conflict" description="In Ref. 2; AAA69513." evidence="3" ref="2">
    <original>R</original>
    <variation>A</variation>
    <location>
        <position position="154"/>
    </location>
</feature>
<feature type="sequence conflict" description="In Ref. 2; AAA69513." evidence="3" ref="2">
    <original>A</original>
    <variation>G</variation>
    <location>
        <position position="164"/>
    </location>
</feature>
<feature type="sequence conflict" description="In Ref. 2; AAA69513." evidence="3" ref="2">
    <original>E</original>
    <variation>Q</variation>
    <location>
        <position position="171"/>
    </location>
</feature>
<feature type="sequence conflict" description="In Ref. 2; AAA69513." evidence="3" ref="2">
    <original>S</original>
    <variation>C</variation>
    <location>
        <position position="264"/>
    </location>
</feature>
<feature type="sequence conflict" description="In Ref. 2; AAA69513." evidence="3" ref="2">
    <original>A</original>
    <variation>S</variation>
    <location>
        <position position="297"/>
    </location>
</feature>
<feature type="sequence conflict" description="In Ref. 1; M81833 and 2; AAA69513." evidence="3" ref="1 2">
    <original>V</original>
    <variation>L</variation>
    <location>
        <position position="332"/>
    </location>
</feature>
<feature type="sequence conflict" description="In Ref. 2; AAA69513." evidence="3" ref="2">
    <original>CRQ</original>
    <variation>LAK</variation>
    <location>
        <begin position="333"/>
        <end position="335"/>
    </location>
</feature>
<feature type="sequence conflict" description="In Ref. 2; AAA69513." evidence="3" ref="2">
    <original>V</original>
    <variation>S</variation>
    <location>
        <position position="370"/>
    </location>
</feature>
<feature type="sequence conflict" description="In Ref. 1; M81833." evidence="3" ref="1">
    <original>KLRV</original>
    <variation>NCASE</variation>
    <location>
        <begin position="449"/>
        <end position="452"/>
    </location>
</feature>
<reference key="1">
    <citation type="journal article" date="1992" name="J. Biol. Chem.">
        <title>A single locus encodes both phenylalanine hydroxylase and tryptophan hydroxylase activities in Drosophila.</title>
        <authorList>
            <person name="Neckameyer W.S."/>
            <person name="White K."/>
        </authorList>
    </citation>
    <scope>NUCLEOTIDE SEQUENCE [GENOMIC RNA]</scope>
    <source>
        <strain>Canton-S</strain>
        <strain>Oregon-R</strain>
        <tissue>Embryo</tissue>
        <tissue>Head</tissue>
    </source>
</reference>
<reference key="2">
    <citation type="journal article" date="1990" name="Gene">
        <title>Sequence and expression of the Drosophila phenylalanine hydroxylase mRNA.</title>
        <authorList>
            <person name="Morales G."/>
            <person name="Requena J.M."/>
            <person name="Jimenez-Ruiz A."/>
            <person name="Lopez M.C."/>
            <person name="Ugarte M."/>
            <person name="Alonso C."/>
        </authorList>
    </citation>
    <scope>NUCLEOTIDE SEQUENCE [MRNA]</scope>
</reference>
<reference key="3">
    <citation type="journal article" date="1996" name="Biochem. Biophys. Res. Commun.">
        <title>Structure of the phenylalanine hydroxylase gene in Drosophila melanogaster and evidence of alternative promoter usage.</title>
        <authorList>
            <person name="Ruiz-Vazquez P."/>
            <person name="Moulard M."/>
            <person name="Silva F.J."/>
        </authorList>
    </citation>
    <scope>NUCLEOTIDE SEQUENCE [GENOMIC DNA]</scope>
    <source>
        <strain>Canton-S</strain>
    </source>
</reference>
<reference key="4">
    <citation type="journal article" date="2000" name="Science">
        <title>The genome sequence of Drosophila melanogaster.</title>
        <authorList>
            <person name="Adams M.D."/>
            <person name="Celniker S.E."/>
            <person name="Holt R.A."/>
            <person name="Evans C.A."/>
            <person name="Gocayne J.D."/>
            <person name="Amanatides P.G."/>
            <person name="Scherer S.E."/>
            <person name="Li P.W."/>
            <person name="Hoskins R.A."/>
            <person name="Galle R.F."/>
            <person name="George R.A."/>
            <person name="Lewis S.E."/>
            <person name="Richards S."/>
            <person name="Ashburner M."/>
            <person name="Henderson S.N."/>
            <person name="Sutton G.G."/>
            <person name="Wortman J.R."/>
            <person name="Yandell M.D."/>
            <person name="Zhang Q."/>
            <person name="Chen L.X."/>
            <person name="Brandon R.C."/>
            <person name="Rogers Y.-H.C."/>
            <person name="Blazej R.G."/>
            <person name="Champe M."/>
            <person name="Pfeiffer B.D."/>
            <person name="Wan K.H."/>
            <person name="Doyle C."/>
            <person name="Baxter E.G."/>
            <person name="Helt G."/>
            <person name="Nelson C.R."/>
            <person name="Miklos G.L.G."/>
            <person name="Abril J.F."/>
            <person name="Agbayani A."/>
            <person name="An H.-J."/>
            <person name="Andrews-Pfannkoch C."/>
            <person name="Baldwin D."/>
            <person name="Ballew R.M."/>
            <person name="Basu A."/>
            <person name="Baxendale J."/>
            <person name="Bayraktaroglu L."/>
            <person name="Beasley E.M."/>
            <person name="Beeson K.Y."/>
            <person name="Benos P.V."/>
            <person name="Berman B.P."/>
            <person name="Bhandari D."/>
            <person name="Bolshakov S."/>
            <person name="Borkova D."/>
            <person name="Botchan M.R."/>
            <person name="Bouck J."/>
            <person name="Brokstein P."/>
            <person name="Brottier P."/>
            <person name="Burtis K.C."/>
            <person name="Busam D.A."/>
            <person name="Butler H."/>
            <person name="Cadieu E."/>
            <person name="Center A."/>
            <person name="Chandra I."/>
            <person name="Cherry J.M."/>
            <person name="Cawley S."/>
            <person name="Dahlke C."/>
            <person name="Davenport L.B."/>
            <person name="Davies P."/>
            <person name="de Pablos B."/>
            <person name="Delcher A."/>
            <person name="Deng Z."/>
            <person name="Mays A.D."/>
            <person name="Dew I."/>
            <person name="Dietz S.M."/>
            <person name="Dodson K."/>
            <person name="Doup L.E."/>
            <person name="Downes M."/>
            <person name="Dugan-Rocha S."/>
            <person name="Dunkov B.C."/>
            <person name="Dunn P."/>
            <person name="Durbin K.J."/>
            <person name="Evangelista C.C."/>
            <person name="Ferraz C."/>
            <person name="Ferriera S."/>
            <person name="Fleischmann W."/>
            <person name="Fosler C."/>
            <person name="Gabrielian A.E."/>
            <person name="Garg N.S."/>
            <person name="Gelbart W.M."/>
            <person name="Glasser K."/>
            <person name="Glodek A."/>
            <person name="Gong F."/>
            <person name="Gorrell J.H."/>
            <person name="Gu Z."/>
            <person name="Guan P."/>
            <person name="Harris M."/>
            <person name="Harris N.L."/>
            <person name="Harvey D.A."/>
            <person name="Heiman T.J."/>
            <person name="Hernandez J.R."/>
            <person name="Houck J."/>
            <person name="Hostin D."/>
            <person name="Houston K.A."/>
            <person name="Howland T.J."/>
            <person name="Wei M.-H."/>
            <person name="Ibegwam C."/>
            <person name="Jalali M."/>
            <person name="Kalush F."/>
            <person name="Karpen G.H."/>
            <person name="Ke Z."/>
            <person name="Kennison J.A."/>
            <person name="Ketchum K.A."/>
            <person name="Kimmel B.E."/>
            <person name="Kodira C.D."/>
            <person name="Kraft C.L."/>
            <person name="Kravitz S."/>
            <person name="Kulp D."/>
            <person name="Lai Z."/>
            <person name="Lasko P."/>
            <person name="Lei Y."/>
            <person name="Levitsky A.A."/>
            <person name="Li J.H."/>
            <person name="Li Z."/>
            <person name="Liang Y."/>
            <person name="Lin X."/>
            <person name="Liu X."/>
            <person name="Mattei B."/>
            <person name="McIntosh T.C."/>
            <person name="McLeod M.P."/>
            <person name="McPherson D."/>
            <person name="Merkulov G."/>
            <person name="Milshina N.V."/>
            <person name="Mobarry C."/>
            <person name="Morris J."/>
            <person name="Moshrefi A."/>
            <person name="Mount S.M."/>
            <person name="Moy M."/>
            <person name="Murphy B."/>
            <person name="Murphy L."/>
            <person name="Muzny D.M."/>
            <person name="Nelson D.L."/>
            <person name="Nelson D.R."/>
            <person name="Nelson K.A."/>
            <person name="Nixon K."/>
            <person name="Nusskern D.R."/>
            <person name="Pacleb J.M."/>
            <person name="Palazzolo M."/>
            <person name="Pittman G.S."/>
            <person name="Pan S."/>
            <person name="Pollard J."/>
            <person name="Puri V."/>
            <person name="Reese M.G."/>
            <person name="Reinert K."/>
            <person name="Remington K."/>
            <person name="Saunders R.D.C."/>
            <person name="Scheeler F."/>
            <person name="Shen H."/>
            <person name="Shue B.C."/>
            <person name="Siden-Kiamos I."/>
            <person name="Simpson M."/>
            <person name="Skupski M.P."/>
            <person name="Smith T.J."/>
            <person name="Spier E."/>
            <person name="Spradling A.C."/>
            <person name="Stapleton M."/>
            <person name="Strong R."/>
            <person name="Sun E."/>
            <person name="Svirskas R."/>
            <person name="Tector C."/>
            <person name="Turner R."/>
            <person name="Venter E."/>
            <person name="Wang A.H."/>
            <person name="Wang X."/>
            <person name="Wang Z.-Y."/>
            <person name="Wassarman D.A."/>
            <person name="Weinstock G.M."/>
            <person name="Weissenbach J."/>
            <person name="Williams S.M."/>
            <person name="Woodage T."/>
            <person name="Worley K.C."/>
            <person name="Wu D."/>
            <person name="Yang S."/>
            <person name="Yao Q.A."/>
            <person name="Ye J."/>
            <person name="Yeh R.-F."/>
            <person name="Zaveri J.S."/>
            <person name="Zhan M."/>
            <person name="Zhang G."/>
            <person name="Zhao Q."/>
            <person name="Zheng L."/>
            <person name="Zheng X.H."/>
            <person name="Zhong F.N."/>
            <person name="Zhong W."/>
            <person name="Zhou X."/>
            <person name="Zhu S.C."/>
            <person name="Zhu X."/>
            <person name="Smith H.O."/>
            <person name="Gibbs R.A."/>
            <person name="Myers E.W."/>
            <person name="Rubin G.M."/>
            <person name="Venter J.C."/>
        </authorList>
    </citation>
    <scope>NUCLEOTIDE SEQUENCE [LARGE SCALE GENOMIC DNA]</scope>
    <source>
        <strain>Berkeley</strain>
    </source>
</reference>
<reference key="5">
    <citation type="journal article" date="2002" name="Genome Biol.">
        <title>Annotation of the Drosophila melanogaster euchromatic genome: a systematic review.</title>
        <authorList>
            <person name="Misra S."/>
            <person name="Crosby M.A."/>
            <person name="Mungall C.J."/>
            <person name="Matthews B.B."/>
            <person name="Campbell K.S."/>
            <person name="Hradecky P."/>
            <person name="Huang Y."/>
            <person name="Kaminker J.S."/>
            <person name="Millburn G.H."/>
            <person name="Prochnik S.E."/>
            <person name="Smith C.D."/>
            <person name="Tupy J.L."/>
            <person name="Whitfield E.J."/>
            <person name="Bayraktaroglu L."/>
            <person name="Berman B.P."/>
            <person name="Bettencourt B.R."/>
            <person name="Celniker S.E."/>
            <person name="de Grey A.D.N.J."/>
            <person name="Drysdale R.A."/>
            <person name="Harris N.L."/>
            <person name="Richter J."/>
            <person name="Russo S."/>
            <person name="Schroeder A.J."/>
            <person name="Shu S.Q."/>
            <person name="Stapleton M."/>
            <person name="Yamada C."/>
            <person name="Ashburner M."/>
            <person name="Gelbart W.M."/>
            <person name="Rubin G.M."/>
            <person name="Lewis S.E."/>
        </authorList>
    </citation>
    <scope>GENOME REANNOTATION</scope>
    <source>
        <strain>Berkeley</strain>
    </source>
</reference>
<reference key="6">
    <citation type="journal article" date="2002" name="Genome Biol.">
        <title>A Drosophila full-length cDNA resource.</title>
        <authorList>
            <person name="Stapleton M."/>
            <person name="Carlson J.W."/>
            <person name="Brokstein P."/>
            <person name="Yu C."/>
            <person name="Champe M."/>
            <person name="George R.A."/>
            <person name="Guarin H."/>
            <person name="Kronmiller B."/>
            <person name="Pacleb J.M."/>
            <person name="Park S."/>
            <person name="Wan K.H."/>
            <person name="Rubin G.M."/>
            <person name="Celniker S.E."/>
        </authorList>
    </citation>
    <scope>NUCLEOTIDE SEQUENCE [LARGE SCALE MRNA]</scope>
    <source>
        <strain>Berkeley</strain>
        <tissue>Head</tissue>
    </source>
</reference>
<reference key="7">
    <citation type="journal article" date="1999" name="Insect Biochem. Mol. Biol.">
        <title>Aberrant splicing of the Drosophila melanogaster phenylalanine hydroxylase pre-mRNA caused by the insertion of a B104/roo transposable element in the Henna locus.</title>
        <authorList>
            <person name="Ruiz-Vazquez P."/>
            <person name="Silva F.J."/>
        </authorList>
    </citation>
    <scope>NUCLEOTIDE SEQUENCE [GENOMIC DNA / MRNA] OF 5-93 AND 161-412 (MUTANT HN-R3)</scope>
</reference>
<organism>
    <name type="scientific">Drosophila melanogaster</name>
    <name type="common">Fruit fly</name>
    <dbReference type="NCBI Taxonomy" id="7227"/>
    <lineage>
        <taxon>Eukaryota</taxon>
        <taxon>Metazoa</taxon>
        <taxon>Ecdysozoa</taxon>
        <taxon>Arthropoda</taxon>
        <taxon>Hexapoda</taxon>
        <taxon>Insecta</taxon>
        <taxon>Pterygota</taxon>
        <taxon>Neoptera</taxon>
        <taxon>Endopterygota</taxon>
        <taxon>Diptera</taxon>
        <taxon>Brachycera</taxon>
        <taxon>Muscomorpha</taxon>
        <taxon>Ephydroidea</taxon>
        <taxon>Drosophilidae</taxon>
        <taxon>Drosophila</taxon>
        <taxon>Sophophora</taxon>
    </lineage>
</organism>
<comment type="catalytic activity">
    <reaction>
        <text>(6R)-L-erythro-5,6,7,8-tetrahydrobiopterin + L-phenylalanine + O2 = (4aS,6R)-4a-hydroxy-L-erythro-5,6,7,8-tetrahydrobiopterin + L-tyrosine</text>
        <dbReference type="Rhea" id="RHEA:20273"/>
        <dbReference type="ChEBI" id="CHEBI:15379"/>
        <dbReference type="ChEBI" id="CHEBI:15642"/>
        <dbReference type="ChEBI" id="CHEBI:58095"/>
        <dbReference type="ChEBI" id="CHEBI:58315"/>
        <dbReference type="ChEBI" id="CHEBI:59560"/>
        <dbReference type="EC" id="1.14.16.1"/>
    </reaction>
</comment>
<comment type="catalytic activity">
    <reaction>
        <text>(6R)-L-erythro-5,6,7,8-tetrahydrobiopterin + L-tryptophan + O2 = 5-hydroxy-L-tryptophan + (4aS,6R)-4a-hydroxy-L-erythro-5,6,7,8-tetrahydrobiopterin</text>
        <dbReference type="Rhea" id="RHEA:16709"/>
        <dbReference type="ChEBI" id="CHEBI:15379"/>
        <dbReference type="ChEBI" id="CHEBI:15642"/>
        <dbReference type="ChEBI" id="CHEBI:57912"/>
        <dbReference type="ChEBI" id="CHEBI:58266"/>
        <dbReference type="ChEBI" id="CHEBI:59560"/>
        <dbReference type="EC" id="1.14.16.4"/>
    </reaction>
</comment>
<comment type="cofactor">
    <cofactor>
        <name>Fe(2+)</name>
        <dbReference type="ChEBI" id="CHEBI:29033"/>
    </cofactor>
</comment>
<comment type="activity regulation">
    <text>N-terminal region of PAH is thought to contain allosteric binding sites for phenylalanine and to constitute an 'inhibitory' domain that regulates the activity of a catalytic domain in the C-terminal portion of the molecule.</text>
</comment>
<comment type="pathway">
    <text>Amino-acid degradation; L-phenylalanine degradation; acetoacetate and fumarate from L-phenylalanine: step 1/6.</text>
</comment>
<comment type="tissue specificity">
    <text>Phenylalanine hydrolase activity is found in yolk granules of embryos, and female abdomen and fat body tissues. Tryptophan hydroxylase is expressed in serotonergic neurons. Both enzymes are present in cuticular tissues.</text>
</comment>
<comment type="miscellaneous">
    <text>In Drosophila, the 2 enzymes, PAH and TRH are found to be encoded by the same gene. Preference for the substrate is probably due to post-translational modifications such as phosphorylation, or by changes in the N-terminal regulatory domain.</text>
</comment>
<comment type="similarity">
    <text evidence="3">Belongs to the biopterin-dependent aromatic amino acid hydroxylase family.</text>
</comment>
<keyword id="KW-0021">Allosteric enzyme</keyword>
<keyword id="KW-0408">Iron</keyword>
<keyword id="KW-0479">Metal-binding</keyword>
<keyword id="KW-0503">Monooxygenase</keyword>
<keyword id="KW-0560">Oxidoreductase</keyword>
<keyword id="KW-0585">Phenylalanine catabolism</keyword>
<keyword id="KW-0597">Phosphoprotein</keyword>
<keyword id="KW-1185">Reference proteome</keyword>
<keyword id="KW-0724">Serotonin biosynthesis</keyword>
<protein>
    <recommendedName>
        <fullName>Protein henna</fullName>
        <ecNumber>1.14.16.1</ecNumber>
        <ecNumber>1.14.16.4</ecNumber>
    </recommendedName>
    <alternativeName>
        <fullName>Phe-4-monooxygenase</fullName>
    </alternativeName>
    <alternativeName>
        <fullName>Phenylalanine-4-hydroxylase</fullName>
        <shortName>PAH</shortName>
    </alternativeName>
    <alternativeName>
        <fullName>Tryptophan 5-hydroxylase</fullName>
        <shortName>TRH</shortName>
    </alternativeName>
    <alternativeName>
        <fullName>Tryptophan 5-monooxygenase</fullName>
    </alternativeName>
</protein>
<sequence>MYQRQVSFDKPTRVEDSAYIVEGVDIKEARNTCLLFSPKDSSLSSGALANILAIFKKHDINLVHIESRSSLRVPGYEFFVEADGKSGALGKAIEDVKEQCSYFNIISRDYKDNATAVPWFPRRIRDLDRFANQILSYGSELDADHPGFTDPEYRKRRKYFADIAYNYKHGEPLPHVDYTKEEIETWGIIFRNLTKLYKTHACREYNHVFPLLVDNCGFREDNIPQLEDVSNFLRDCTGFTLRPVAGLLSSRDFLAGLAFRVFHSTQYIRHPSKPMYTPEPDVCHELMGHVPLFADPAFAQFSQEIGLASLGAPDDYIEKLSTIFWFTVEYGVCRQEGELKAYGAGLLSSYGELEYCLTDKPQLKDFEPEVTGVTKYPITQFQPLYYVADSFETAKEKTIKFANSIPRPFGVRYNAYTQSVEVLDSKPQISNLMDNINSEFQILQNAVAKLRV</sequence>
<proteinExistence type="evidence at transcript level"/>